<protein>
    <recommendedName>
        <fullName>NADP phosphatase 1</fullName>
        <ecNumber>3.1.3.-</ecNumber>
    </recommendedName>
    <alternativeName>
        <fullName>NADP phosphatase I</fullName>
    </alternativeName>
</protein>
<organism evidence="2">
    <name type="scientific">Arthrobacter sp. (strain KM)</name>
    <dbReference type="NCBI Taxonomy" id="184230"/>
    <lineage>
        <taxon>Bacteria</taxon>
        <taxon>Bacillati</taxon>
        <taxon>Actinomycetota</taxon>
        <taxon>Actinomycetes</taxon>
        <taxon>Micrococcales</taxon>
        <taxon>Micrococcaceae</taxon>
        <taxon>Arthrobacter</taxon>
    </lineage>
</organism>
<evidence type="ECO:0000269" key="1">
    <source>
    </source>
</evidence>
<evidence type="ECO:0000305" key="2"/>
<comment type="biophysicochemical properties">
    <phDependence>
        <text>Optimum pH is 7-8.</text>
    </phDependence>
</comment>
<comment type="subunit">
    <text evidence="1 2">Homodimer.</text>
</comment>
<comment type="subcellular location">
    <subcellularLocation>
        <location evidence="1">Cytoplasm</location>
    </subcellularLocation>
</comment>
<keyword id="KW-0963">Cytoplasm</keyword>
<keyword id="KW-0903">Direct protein sequencing</keyword>
<keyword id="KW-0378">Hydrolase</keyword>
<sequence length="29" mass="3081">KSAAEVQNTQQAIIPAQEKANLGNQNIMA</sequence>
<name>NDP1_ARTSK</name>
<reference key="1">
    <citation type="journal article" date="2004" name="J. Basic Microbiol.">
        <title>Cytosolic NADP phosphatases I and II from Arthrobacter sp. strain KM: implication in regulation of NAD+/NADP+ balance.</title>
        <authorList>
            <person name="Kawai S."/>
            <person name="Mori S."/>
            <person name="Mukai T."/>
            <person name="Murata K."/>
        </authorList>
    </citation>
    <scope>PROTEIN SEQUENCE</scope>
    <scope>SUBUNIT</scope>
    <scope>SUBCELLULAR LOCATION</scope>
</reference>
<proteinExistence type="evidence at protein level"/>
<dbReference type="EC" id="3.1.3.-"/>
<dbReference type="SABIO-RK" id="P83575"/>
<dbReference type="GO" id="GO:0005737">
    <property type="term" value="C:cytoplasm"/>
    <property type="evidence" value="ECO:0007669"/>
    <property type="project" value="UniProtKB-SubCell"/>
</dbReference>
<dbReference type="GO" id="GO:0016787">
    <property type="term" value="F:hydrolase activity"/>
    <property type="evidence" value="ECO:0007669"/>
    <property type="project" value="UniProtKB-KW"/>
</dbReference>
<accession>P83575</accession>
<feature type="chain" id="PRO_0000096770" description="NADP phosphatase 1">
    <location>
        <begin position="1"/>
        <end position="29" status="greater than"/>
    </location>
</feature>
<feature type="non-terminal residue" evidence="2">
    <location>
        <position position="29"/>
    </location>
</feature>